<evidence type="ECO:0000255" key="1">
    <source>
        <dbReference type="HAMAP-Rule" id="MF_00178"/>
    </source>
</evidence>
<name>RISB_SALDC</name>
<reference key="1">
    <citation type="journal article" date="2011" name="J. Bacteriol.">
        <title>Comparative genomics of 28 Salmonella enterica isolates: evidence for CRISPR-mediated adaptive sublineage evolution.</title>
        <authorList>
            <person name="Fricke W.F."/>
            <person name="Mammel M.K."/>
            <person name="McDermott P.F."/>
            <person name="Tartera C."/>
            <person name="White D.G."/>
            <person name="Leclerc J.E."/>
            <person name="Ravel J."/>
            <person name="Cebula T.A."/>
        </authorList>
    </citation>
    <scope>NUCLEOTIDE SEQUENCE [LARGE SCALE GENOMIC DNA]</scope>
    <source>
        <strain>CT_02021853</strain>
    </source>
</reference>
<protein>
    <recommendedName>
        <fullName evidence="1">6,7-dimethyl-8-ribityllumazine synthase</fullName>
        <shortName evidence="1">DMRL synthase</shortName>
        <shortName evidence="1">LS</shortName>
        <shortName evidence="1">Lumazine synthase</shortName>
        <ecNumber evidence="1">2.5.1.78</ecNumber>
    </recommendedName>
</protein>
<sequence>MNIIKANVAAPDARVAITIARFNQFINDSLLDGAVDALTRIGQVKDDNITVVWVPGAYELPLATEALAKSGKYDAVVALGTVIRGGTAHFEYVAGGASNGLASVAQDSGVPVAFGVLTTESIEQAIERAGTKAGNKGAEAALTALEMINVLKAIKA</sequence>
<feature type="chain" id="PRO_1000098222" description="6,7-dimethyl-8-ribityllumazine synthase">
    <location>
        <begin position="1"/>
        <end position="156"/>
    </location>
</feature>
<feature type="active site" description="Proton donor" evidence="1">
    <location>
        <position position="89"/>
    </location>
</feature>
<feature type="binding site" evidence="1">
    <location>
        <position position="22"/>
    </location>
    <ligand>
        <name>5-amino-6-(D-ribitylamino)uracil</name>
        <dbReference type="ChEBI" id="CHEBI:15934"/>
    </ligand>
</feature>
<feature type="binding site" evidence="1">
    <location>
        <begin position="57"/>
        <end position="59"/>
    </location>
    <ligand>
        <name>5-amino-6-(D-ribitylamino)uracil</name>
        <dbReference type="ChEBI" id="CHEBI:15934"/>
    </ligand>
</feature>
<feature type="binding site" evidence="1">
    <location>
        <begin position="81"/>
        <end position="83"/>
    </location>
    <ligand>
        <name>5-amino-6-(D-ribitylamino)uracil</name>
        <dbReference type="ChEBI" id="CHEBI:15934"/>
    </ligand>
</feature>
<feature type="binding site" evidence="1">
    <location>
        <begin position="86"/>
        <end position="87"/>
    </location>
    <ligand>
        <name>(2S)-2-hydroxy-3-oxobutyl phosphate</name>
        <dbReference type="ChEBI" id="CHEBI:58830"/>
    </ligand>
</feature>
<feature type="binding site" evidence="1">
    <location>
        <position position="114"/>
    </location>
    <ligand>
        <name>5-amino-6-(D-ribitylamino)uracil</name>
        <dbReference type="ChEBI" id="CHEBI:15934"/>
    </ligand>
</feature>
<feature type="binding site" evidence="1">
    <location>
        <position position="128"/>
    </location>
    <ligand>
        <name>(2S)-2-hydroxy-3-oxobutyl phosphate</name>
        <dbReference type="ChEBI" id="CHEBI:58830"/>
    </ligand>
</feature>
<gene>
    <name evidence="1" type="primary">ribH</name>
    <name type="ordered locus">SeD_A0458</name>
</gene>
<comment type="function">
    <text evidence="1">Catalyzes the formation of 6,7-dimethyl-8-ribityllumazine by condensation of 5-amino-6-(D-ribitylamino)uracil with 3,4-dihydroxy-2-butanone 4-phosphate. This is the penultimate step in the biosynthesis of riboflavin.</text>
</comment>
<comment type="catalytic activity">
    <reaction evidence="1">
        <text>(2S)-2-hydroxy-3-oxobutyl phosphate + 5-amino-6-(D-ribitylamino)uracil = 6,7-dimethyl-8-(1-D-ribityl)lumazine + phosphate + 2 H2O + H(+)</text>
        <dbReference type="Rhea" id="RHEA:26152"/>
        <dbReference type="ChEBI" id="CHEBI:15377"/>
        <dbReference type="ChEBI" id="CHEBI:15378"/>
        <dbReference type="ChEBI" id="CHEBI:15934"/>
        <dbReference type="ChEBI" id="CHEBI:43474"/>
        <dbReference type="ChEBI" id="CHEBI:58201"/>
        <dbReference type="ChEBI" id="CHEBI:58830"/>
        <dbReference type="EC" id="2.5.1.78"/>
    </reaction>
</comment>
<comment type="pathway">
    <text evidence="1">Cofactor biosynthesis; riboflavin biosynthesis; riboflavin from 2-hydroxy-3-oxobutyl phosphate and 5-amino-6-(D-ribitylamino)uracil: step 1/2.</text>
</comment>
<comment type="subunit">
    <text evidence="1">Forms an icosahedral capsid composed of 60 subunits, arranged as a dodecamer of pentamers.</text>
</comment>
<comment type="similarity">
    <text evidence="1">Belongs to the DMRL synthase family.</text>
</comment>
<keyword id="KW-0686">Riboflavin biosynthesis</keyword>
<keyword id="KW-0808">Transferase</keyword>
<proteinExistence type="inferred from homology"/>
<dbReference type="EC" id="2.5.1.78" evidence="1"/>
<dbReference type="EMBL" id="CP001144">
    <property type="protein sequence ID" value="ACH76771.1"/>
    <property type="molecule type" value="Genomic_DNA"/>
</dbReference>
<dbReference type="SMR" id="B5FKS2"/>
<dbReference type="KEGG" id="sed:SeD_A0458"/>
<dbReference type="HOGENOM" id="CLU_089358_1_1_6"/>
<dbReference type="UniPathway" id="UPA00275">
    <property type="reaction ID" value="UER00404"/>
</dbReference>
<dbReference type="Proteomes" id="UP000008322">
    <property type="component" value="Chromosome"/>
</dbReference>
<dbReference type="GO" id="GO:0005829">
    <property type="term" value="C:cytosol"/>
    <property type="evidence" value="ECO:0007669"/>
    <property type="project" value="TreeGrafter"/>
</dbReference>
<dbReference type="GO" id="GO:0009349">
    <property type="term" value="C:riboflavin synthase complex"/>
    <property type="evidence" value="ECO:0007669"/>
    <property type="project" value="InterPro"/>
</dbReference>
<dbReference type="GO" id="GO:0000906">
    <property type="term" value="F:6,7-dimethyl-8-ribityllumazine synthase activity"/>
    <property type="evidence" value="ECO:0007669"/>
    <property type="project" value="UniProtKB-UniRule"/>
</dbReference>
<dbReference type="GO" id="GO:0009231">
    <property type="term" value="P:riboflavin biosynthetic process"/>
    <property type="evidence" value="ECO:0007669"/>
    <property type="project" value="UniProtKB-UniRule"/>
</dbReference>
<dbReference type="CDD" id="cd09209">
    <property type="entry name" value="Lumazine_synthase-I"/>
    <property type="match status" value="1"/>
</dbReference>
<dbReference type="FunFam" id="3.40.50.960:FF:000001">
    <property type="entry name" value="6,7-dimethyl-8-ribityllumazine synthase"/>
    <property type="match status" value="1"/>
</dbReference>
<dbReference type="Gene3D" id="3.40.50.960">
    <property type="entry name" value="Lumazine/riboflavin synthase"/>
    <property type="match status" value="1"/>
</dbReference>
<dbReference type="HAMAP" id="MF_00178">
    <property type="entry name" value="Lumazine_synth"/>
    <property type="match status" value="1"/>
</dbReference>
<dbReference type="InterPro" id="IPR034964">
    <property type="entry name" value="LS"/>
</dbReference>
<dbReference type="InterPro" id="IPR002180">
    <property type="entry name" value="LS/RS"/>
</dbReference>
<dbReference type="InterPro" id="IPR036467">
    <property type="entry name" value="LS/RS_sf"/>
</dbReference>
<dbReference type="NCBIfam" id="TIGR00114">
    <property type="entry name" value="lumazine-synth"/>
    <property type="match status" value="1"/>
</dbReference>
<dbReference type="NCBIfam" id="NF000812">
    <property type="entry name" value="PRK00061.1-4"/>
    <property type="match status" value="1"/>
</dbReference>
<dbReference type="PANTHER" id="PTHR21058:SF0">
    <property type="entry name" value="6,7-DIMETHYL-8-RIBITYLLUMAZINE SYNTHASE"/>
    <property type="match status" value="1"/>
</dbReference>
<dbReference type="PANTHER" id="PTHR21058">
    <property type="entry name" value="6,7-DIMETHYL-8-RIBITYLLUMAZINE SYNTHASE DMRL SYNTHASE LUMAZINE SYNTHASE"/>
    <property type="match status" value="1"/>
</dbReference>
<dbReference type="Pfam" id="PF00885">
    <property type="entry name" value="DMRL_synthase"/>
    <property type="match status" value="1"/>
</dbReference>
<dbReference type="SUPFAM" id="SSF52121">
    <property type="entry name" value="Lumazine synthase"/>
    <property type="match status" value="1"/>
</dbReference>
<organism>
    <name type="scientific">Salmonella dublin (strain CT_02021853)</name>
    <dbReference type="NCBI Taxonomy" id="439851"/>
    <lineage>
        <taxon>Bacteria</taxon>
        <taxon>Pseudomonadati</taxon>
        <taxon>Pseudomonadota</taxon>
        <taxon>Gammaproteobacteria</taxon>
        <taxon>Enterobacterales</taxon>
        <taxon>Enterobacteriaceae</taxon>
        <taxon>Salmonella</taxon>
    </lineage>
</organism>
<accession>B5FKS2</accession>